<keyword id="KW-0238">DNA-binding</keyword>
<keyword id="KW-1185">Reference proteome</keyword>
<keyword id="KW-0804">Transcription</keyword>
<keyword id="KW-0805">Transcription regulation</keyword>
<keyword id="KW-0806">Transcription termination</keyword>
<name>REGQ_BP933</name>
<accession>P68922</accession>
<accession>Q9T0Q4</accession>
<accession>Q9ZWW9</accession>
<sequence>MRDIRQVLERWGAWAANNYEDVTWSPIAAGFKGLIPEKVKSRPQCCDDDAMVICGCIARLYRNNRDLHDLLVDYYVLGETFMALARKHGCSDTCIGKRLHKAEGIVEGMLMMLGVRLEMDRYVERELPGGRTSVFYQRKNSLRS</sequence>
<comment type="function">
    <text evidence="1">Positively regulates expression of some phage genes. Bacterial host RNA polymerase modified by antitermination proteins transcribes through termination sites that otherwise prevent expression of the regulated genes (By similarity).</text>
</comment>
<comment type="similarity">
    <text evidence="2">Belongs to the phage antitermination Q type 1 family.</text>
</comment>
<comment type="sequence caution" evidence="2">
    <conflict type="erroneous initiation">
        <sequence resource="EMBL-CDS" id="AAD25444"/>
    </conflict>
</comment>
<gene>
    <name type="primary">Q</name>
    <name type="ordered locus">L0099</name>
</gene>
<organismHost>
    <name type="scientific">Escherichia coli O157:H7</name>
    <dbReference type="NCBI Taxonomy" id="83334"/>
</organismHost>
<proteinExistence type="inferred from homology"/>
<organism>
    <name type="scientific">Escherichia phage 933W</name>
    <name type="common">Bacteriophage 933W</name>
    <dbReference type="NCBI Taxonomy" id="10730"/>
    <lineage>
        <taxon>Viruses</taxon>
        <taxon>Duplodnaviria</taxon>
        <taxon>Heunggongvirae</taxon>
        <taxon>Uroviricota</taxon>
        <taxon>Caudoviricetes</taxon>
        <taxon>Sepvirinae</taxon>
        <taxon>Traversvirus</taxon>
        <taxon>Traversvirus tv933W</taxon>
    </lineage>
</organism>
<reference key="1">
    <citation type="journal article" date="1999" name="Mol. Gen. Genet.">
        <title>Shiga toxins even when different are encoded at identical positions in the genomes of related temperate bacteriophages.</title>
        <authorList>
            <person name="Karch H."/>
            <person name="Schmidt H."/>
            <person name="Janetzki-Mittmann C."/>
            <person name="Scheef J."/>
            <person name="Kroeger M."/>
        </authorList>
    </citation>
    <scope>NUCLEOTIDE SEQUENCE [GENOMIC DNA]</scope>
</reference>
<reference key="2">
    <citation type="journal article" date="1999" name="J. Bacteriol.">
        <title>Sequence of Shiga toxin 2 phage 933W from Escherichia coli O157:H7: Shiga toxin as a phage late-gene product.</title>
        <authorList>
            <person name="Plunkett G. III"/>
            <person name="Rose D.J."/>
            <person name="Durfee T.J."/>
            <person name="Blattner F.R."/>
        </authorList>
    </citation>
    <scope>NUCLEOTIDE SEQUENCE [LARGE SCALE GENOMIC DNA]</scope>
</reference>
<protein>
    <recommendedName>
        <fullName>Antitermination protein Q</fullName>
    </recommendedName>
</protein>
<dbReference type="EMBL" id="Y10775">
    <property type="protein sequence ID" value="CAB39299.1"/>
    <property type="molecule type" value="Genomic_DNA"/>
</dbReference>
<dbReference type="EMBL" id="AF125520">
    <property type="protein sequence ID" value="AAD25444.1"/>
    <property type="status" value="ALT_INIT"/>
    <property type="molecule type" value="Genomic_DNA"/>
</dbReference>
<dbReference type="RefSeq" id="NP_049499.1">
    <property type="nucleotide sequence ID" value="NC_000924.1"/>
</dbReference>
<dbReference type="SMR" id="P68922"/>
<dbReference type="GeneID" id="1261979"/>
<dbReference type="KEGG" id="vg:1261979"/>
<dbReference type="OrthoDB" id="12574at10239"/>
<dbReference type="Proteomes" id="UP000002135">
    <property type="component" value="Genome"/>
</dbReference>
<dbReference type="GO" id="GO:0003677">
    <property type="term" value="F:DNA binding"/>
    <property type="evidence" value="ECO:0007669"/>
    <property type="project" value="UniProtKB-KW"/>
</dbReference>
<dbReference type="GO" id="GO:0006353">
    <property type="term" value="P:DNA-templated transcription termination"/>
    <property type="evidence" value="ECO:0007669"/>
    <property type="project" value="UniProtKB-KW"/>
</dbReference>
<dbReference type="GO" id="GO:0060567">
    <property type="term" value="P:negative regulation of termination of DNA-templated transcription"/>
    <property type="evidence" value="ECO:0007669"/>
    <property type="project" value="InterPro"/>
</dbReference>
<dbReference type="InterPro" id="IPR010534">
    <property type="entry name" value="Phage_933W_GpQ"/>
</dbReference>
<dbReference type="Pfam" id="PF06530">
    <property type="entry name" value="Phage_antitermQ"/>
    <property type="match status" value="1"/>
</dbReference>
<evidence type="ECO:0000250" key="1"/>
<evidence type="ECO:0000305" key="2"/>
<feature type="chain" id="PRO_0000073887" description="Antitermination protein Q">
    <location>
        <begin position="1"/>
        <end position="144"/>
    </location>
</feature>
<feature type="sequence conflict" description="In Ref. 1; CAB39299." evidence="2" ref="1">
    <original>E</original>
    <variation>G</variation>
    <location>
        <position position="126"/>
    </location>
</feature>